<dbReference type="PIR" id="A92971">
    <property type="entry name" value="A92971"/>
</dbReference>
<dbReference type="SMR" id="P62971"/>
<dbReference type="GO" id="GO:0005576">
    <property type="term" value="C:extracellular region"/>
    <property type="evidence" value="ECO:0007669"/>
    <property type="project" value="UniProtKB-SubCell"/>
</dbReference>
<keyword id="KW-0027">Amidation</keyword>
<keyword id="KW-0903">Direct protein sequencing</keyword>
<keyword id="KW-0873">Pyrrolidone carboxylic acid</keyword>
<keyword id="KW-0964">Secreted</keyword>
<reference key="1">
    <citation type="journal article" date="1974" name="J. Neurochem.">
        <title>Biosynthesis of thyrotropin releasing factor by newt (Triturus viridescens) brain in vitro. Isolation and characterization of thyrotropin releasing factor.</title>
        <authorList>
            <person name="Grimm-Joergensen Y."/>
            <person name="McKelvy J.F."/>
        </authorList>
    </citation>
    <scope>PROTEIN SEQUENCE</scope>
    <scope>PYROGLUTAMATE FORMATION AT GLN-1</scope>
    <scope>AMIDATION AT PRO-3</scope>
    <source>
        <tissue>Brain</tissue>
    </source>
</reference>
<sequence>QHP</sequence>
<accession>P62971</accession>
<accession>P01151</accession>
<comment type="function">
    <text>Functions as a regulator of the biosynthesis of TSH in the anterior pituitary gland and as a neurotransmitter/ neuromodulator in the central and peripheral nervous systems.</text>
</comment>
<comment type="subcellular location">
    <subcellularLocation>
        <location>Secreted</location>
    </subcellularLocation>
</comment>
<comment type="similarity">
    <text evidence="2">Belongs to the TRH family.</text>
</comment>
<protein>
    <recommendedName>
        <fullName>Thyrotropin-releasing hormone</fullName>
        <shortName>TRH</shortName>
    </recommendedName>
    <alternativeName>
        <fullName>Protirelin</fullName>
    </alternativeName>
    <alternativeName>
        <fullName>TSH-releasing factor</fullName>
    </alternativeName>
    <alternativeName>
        <fullName>Thyroliberin</fullName>
    </alternativeName>
    <alternativeName>
        <fullName>Thyrotropin-releasing factor</fullName>
        <shortName>TRF</shortName>
    </alternativeName>
</protein>
<organism>
    <name type="scientific">Notophthalmus viridescens</name>
    <name type="common">Eastern newt</name>
    <name type="synonym">Triturus viridescens</name>
    <dbReference type="NCBI Taxonomy" id="8316"/>
    <lineage>
        <taxon>Eukaryota</taxon>
        <taxon>Metazoa</taxon>
        <taxon>Chordata</taxon>
        <taxon>Craniata</taxon>
        <taxon>Vertebrata</taxon>
        <taxon>Euteleostomi</taxon>
        <taxon>Amphibia</taxon>
        <taxon>Batrachia</taxon>
        <taxon>Caudata</taxon>
        <taxon>Salamandroidea</taxon>
        <taxon>Salamandridae</taxon>
        <taxon>Pleurodelinae</taxon>
        <taxon>Notophthalmus</taxon>
    </lineage>
</organism>
<name>TRH_NOTVI</name>
<evidence type="ECO:0000269" key="1">
    <source>
    </source>
</evidence>
<evidence type="ECO:0000305" key="2"/>
<proteinExistence type="evidence at protein level"/>
<feature type="peptide" id="PRO_0000044564" description="Thyrotropin-releasing hormone">
    <location>
        <begin position="1"/>
        <end position="3"/>
    </location>
</feature>
<feature type="modified residue" description="Pyrrolidone carboxylic acid" evidence="1">
    <location>
        <position position="1"/>
    </location>
</feature>
<feature type="modified residue" description="Proline amide" evidence="1">
    <location>
        <position position="3"/>
    </location>
</feature>